<proteinExistence type="inferred from homology"/>
<comment type="function">
    <text evidence="1">RNaseP catalyzes the removal of the 5'-leader sequence from pre-tRNA to produce the mature 5'-terminus. It can also cleave other RNA substrates such as 4.5S RNA. The protein component plays an auxiliary but essential role in vivo by binding to the 5'-leader sequence and broadening the substrate specificity of the ribozyme.</text>
</comment>
<comment type="catalytic activity">
    <reaction evidence="1">
        <text>Endonucleolytic cleavage of RNA, removing 5'-extranucleotides from tRNA precursor.</text>
        <dbReference type="EC" id="3.1.26.5"/>
    </reaction>
</comment>
<comment type="subunit">
    <text evidence="1">Consists of a catalytic RNA component (M1 or rnpB) and a protein subunit.</text>
</comment>
<comment type="similarity">
    <text evidence="1">Belongs to the RnpA family.</text>
</comment>
<comment type="sequence caution" evidence="3">
    <conflict type="erroneous initiation">
        <sequence resource="EMBL-CDS" id="AAN34190"/>
    </conflict>
</comment>
<comment type="sequence caution" evidence="3">
    <conflict type="erroneous initiation">
        <sequence resource="EMBL-CDS" id="AEM20466"/>
    </conflict>
    <text>Extended N-terminus.</text>
</comment>
<evidence type="ECO:0000255" key="1">
    <source>
        <dbReference type="HAMAP-Rule" id="MF_00227"/>
    </source>
</evidence>
<evidence type="ECO:0000256" key="2">
    <source>
        <dbReference type="SAM" id="MobiDB-lite"/>
    </source>
</evidence>
<evidence type="ECO:0000305" key="3"/>
<keyword id="KW-0255">Endonuclease</keyword>
<keyword id="KW-0378">Hydrolase</keyword>
<keyword id="KW-0540">Nuclease</keyword>
<keyword id="KW-0694">RNA-binding</keyword>
<keyword id="KW-0819">tRNA processing</keyword>
<name>RNPA_BRUSU</name>
<accession>Q8FV30</accession>
<accession>G0KE28</accession>
<protein>
    <recommendedName>
        <fullName evidence="1">Ribonuclease P protein component</fullName>
        <shortName evidence="1">RNase P protein</shortName>
        <shortName evidence="1">RNaseP protein</shortName>
        <ecNumber evidence="1">3.1.26.5</ecNumber>
    </recommendedName>
    <alternativeName>
        <fullName evidence="1">Protein C5</fullName>
    </alternativeName>
</protein>
<reference key="1">
    <citation type="journal article" date="2002" name="Proc. Natl. Acad. Sci. U.S.A.">
        <title>The Brucella suis genome reveals fundamental similarities between animal and plant pathogens and symbionts.</title>
        <authorList>
            <person name="Paulsen I.T."/>
            <person name="Seshadri R."/>
            <person name="Nelson K.E."/>
            <person name="Eisen J.A."/>
            <person name="Heidelberg J.F."/>
            <person name="Read T.D."/>
            <person name="Dodson R.J."/>
            <person name="Umayam L.A."/>
            <person name="Brinkac L.M."/>
            <person name="Beanan M.J."/>
            <person name="Daugherty S.C."/>
            <person name="DeBoy R.T."/>
            <person name="Durkin A.S."/>
            <person name="Kolonay J.F."/>
            <person name="Madupu R."/>
            <person name="Nelson W.C."/>
            <person name="Ayodeji B."/>
            <person name="Kraul M."/>
            <person name="Shetty J."/>
            <person name="Malek J.A."/>
            <person name="Van Aken S.E."/>
            <person name="Riedmuller S."/>
            <person name="Tettelin H."/>
            <person name="Gill S.R."/>
            <person name="White O."/>
            <person name="Salzberg S.L."/>
            <person name="Hoover D.L."/>
            <person name="Lindler L.E."/>
            <person name="Halling S.M."/>
            <person name="Boyle S.M."/>
            <person name="Fraser C.M."/>
        </authorList>
    </citation>
    <scope>NUCLEOTIDE SEQUENCE [LARGE SCALE GENOMIC DNA]</scope>
    <source>
        <strain>1330</strain>
    </source>
</reference>
<reference key="2">
    <citation type="journal article" date="2011" name="J. Bacteriol.">
        <title>Revised genome sequence of Brucella suis 1330.</title>
        <authorList>
            <person name="Tae H."/>
            <person name="Shallom S."/>
            <person name="Settlage R."/>
            <person name="Preston D."/>
            <person name="Adams L.G."/>
            <person name="Garner H.R."/>
        </authorList>
    </citation>
    <scope>NUCLEOTIDE SEQUENCE [LARGE SCALE GENOMIC DNA]</scope>
    <source>
        <strain>1330</strain>
    </source>
</reference>
<gene>
    <name evidence="1" type="primary">rnpA</name>
    <name type="ordered locus">BRA1022</name>
    <name type="ordered locus">BS1330_II1014</name>
</gene>
<dbReference type="EC" id="3.1.26.5" evidence="1"/>
<dbReference type="EMBL" id="AE014292">
    <property type="protein sequence ID" value="AAN34190.1"/>
    <property type="status" value="ALT_INIT"/>
    <property type="molecule type" value="Genomic_DNA"/>
</dbReference>
<dbReference type="EMBL" id="CP002998">
    <property type="protein sequence ID" value="AEM20466.1"/>
    <property type="status" value="ALT_INIT"/>
    <property type="molecule type" value="Genomic_DNA"/>
</dbReference>
<dbReference type="SMR" id="Q8FV30"/>
<dbReference type="KEGG" id="bms:BRA1022"/>
<dbReference type="KEGG" id="bsi:BS1330_II1014"/>
<dbReference type="HOGENOM" id="CLU_117179_6_1_5"/>
<dbReference type="Proteomes" id="UP000007104">
    <property type="component" value="Chromosome II"/>
</dbReference>
<dbReference type="GO" id="GO:0030677">
    <property type="term" value="C:ribonuclease P complex"/>
    <property type="evidence" value="ECO:0007669"/>
    <property type="project" value="TreeGrafter"/>
</dbReference>
<dbReference type="GO" id="GO:0042781">
    <property type="term" value="F:3'-tRNA processing endoribonuclease activity"/>
    <property type="evidence" value="ECO:0007669"/>
    <property type="project" value="TreeGrafter"/>
</dbReference>
<dbReference type="GO" id="GO:0004526">
    <property type="term" value="F:ribonuclease P activity"/>
    <property type="evidence" value="ECO:0007669"/>
    <property type="project" value="UniProtKB-UniRule"/>
</dbReference>
<dbReference type="GO" id="GO:0000049">
    <property type="term" value="F:tRNA binding"/>
    <property type="evidence" value="ECO:0007669"/>
    <property type="project" value="UniProtKB-UniRule"/>
</dbReference>
<dbReference type="GO" id="GO:0001682">
    <property type="term" value="P:tRNA 5'-leader removal"/>
    <property type="evidence" value="ECO:0007669"/>
    <property type="project" value="UniProtKB-UniRule"/>
</dbReference>
<dbReference type="Gene3D" id="3.30.230.10">
    <property type="match status" value="1"/>
</dbReference>
<dbReference type="HAMAP" id="MF_00227">
    <property type="entry name" value="RNase_P"/>
    <property type="match status" value="1"/>
</dbReference>
<dbReference type="InterPro" id="IPR020568">
    <property type="entry name" value="Ribosomal_Su5_D2-typ_SF"/>
</dbReference>
<dbReference type="InterPro" id="IPR014721">
    <property type="entry name" value="Ribsml_uS5_D2-typ_fold_subgr"/>
</dbReference>
<dbReference type="InterPro" id="IPR000100">
    <property type="entry name" value="RNase_P"/>
</dbReference>
<dbReference type="InterPro" id="IPR020539">
    <property type="entry name" value="RNase_P_CS"/>
</dbReference>
<dbReference type="NCBIfam" id="TIGR00188">
    <property type="entry name" value="rnpA"/>
    <property type="match status" value="1"/>
</dbReference>
<dbReference type="PANTHER" id="PTHR33992">
    <property type="entry name" value="RIBONUCLEASE P PROTEIN COMPONENT"/>
    <property type="match status" value="1"/>
</dbReference>
<dbReference type="PANTHER" id="PTHR33992:SF1">
    <property type="entry name" value="RIBONUCLEASE P PROTEIN COMPONENT"/>
    <property type="match status" value="1"/>
</dbReference>
<dbReference type="Pfam" id="PF00825">
    <property type="entry name" value="Ribonuclease_P"/>
    <property type="match status" value="1"/>
</dbReference>
<dbReference type="SUPFAM" id="SSF54211">
    <property type="entry name" value="Ribosomal protein S5 domain 2-like"/>
    <property type="match status" value="1"/>
</dbReference>
<dbReference type="PROSITE" id="PS00648">
    <property type="entry name" value="RIBONUCLEASE_P"/>
    <property type="match status" value="1"/>
</dbReference>
<feature type="chain" id="PRO_0000198434" description="Ribonuclease P protein component">
    <location>
        <begin position="1"/>
        <end position="141"/>
    </location>
</feature>
<feature type="region of interest" description="Disordered" evidence="2">
    <location>
        <begin position="37"/>
        <end position="56"/>
    </location>
</feature>
<feature type="region of interest" description="Disordered" evidence="2">
    <location>
        <begin position="114"/>
        <end position="141"/>
    </location>
</feature>
<feature type="compositionally biased region" description="Basic and acidic residues" evidence="2">
    <location>
        <begin position="114"/>
        <end position="123"/>
    </location>
</feature>
<organism>
    <name type="scientific">Brucella suis biovar 1 (strain 1330)</name>
    <dbReference type="NCBI Taxonomy" id="204722"/>
    <lineage>
        <taxon>Bacteria</taxon>
        <taxon>Pseudomonadati</taxon>
        <taxon>Pseudomonadota</taxon>
        <taxon>Alphaproteobacteria</taxon>
        <taxon>Hyphomicrobiales</taxon>
        <taxon>Brucellaceae</taxon>
        <taxon>Brucella/Ochrobactrum group</taxon>
        <taxon>Brucella</taxon>
    </lineage>
</organism>
<sequence>MKSKKQILRLRKRAEFLTVRNGEKRRGPLFLMEVRERTEEESNAAKTGDNPRVGFTVTKKNGNAVIRNRIRRRLKEAIRCHAGRDMAPSTDYVIVAREQALNAPFSQLTEELSRRITAKGERRSGRKRRTERPEPGPVNGK</sequence>